<reference key="1">
    <citation type="journal article" date="2013" name="Nature">
        <title>The zebrafish reference genome sequence and its relationship to the human genome.</title>
        <authorList>
            <person name="Howe K."/>
            <person name="Clark M.D."/>
            <person name="Torroja C.F."/>
            <person name="Torrance J."/>
            <person name="Berthelot C."/>
            <person name="Muffato M."/>
            <person name="Collins J.E."/>
            <person name="Humphray S."/>
            <person name="McLaren K."/>
            <person name="Matthews L."/>
            <person name="McLaren S."/>
            <person name="Sealy I."/>
            <person name="Caccamo M."/>
            <person name="Churcher C."/>
            <person name="Scott C."/>
            <person name="Barrett J.C."/>
            <person name="Koch R."/>
            <person name="Rauch G.J."/>
            <person name="White S."/>
            <person name="Chow W."/>
            <person name="Kilian B."/>
            <person name="Quintais L.T."/>
            <person name="Guerra-Assuncao J.A."/>
            <person name="Zhou Y."/>
            <person name="Gu Y."/>
            <person name="Yen J."/>
            <person name="Vogel J.H."/>
            <person name="Eyre T."/>
            <person name="Redmond S."/>
            <person name="Banerjee R."/>
            <person name="Chi J."/>
            <person name="Fu B."/>
            <person name="Langley E."/>
            <person name="Maguire S.F."/>
            <person name="Laird G.K."/>
            <person name="Lloyd D."/>
            <person name="Kenyon E."/>
            <person name="Donaldson S."/>
            <person name="Sehra H."/>
            <person name="Almeida-King J."/>
            <person name="Loveland J."/>
            <person name="Trevanion S."/>
            <person name="Jones M."/>
            <person name="Quail M."/>
            <person name="Willey D."/>
            <person name="Hunt A."/>
            <person name="Burton J."/>
            <person name="Sims S."/>
            <person name="McLay K."/>
            <person name="Plumb B."/>
            <person name="Davis J."/>
            <person name="Clee C."/>
            <person name="Oliver K."/>
            <person name="Clark R."/>
            <person name="Riddle C."/>
            <person name="Elliot D."/>
            <person name="Threadgold G."/>
            <person name="Harden G."/>
            <person name="Ware D."/>
            <person name="Begum S."/>
            <person name="Mortimore B."/>
            <person name="Kerry G."/>
            <person name="Heath P."/>
            <person name="Phillimore B."/>
            <person name="Tracey A."/>
            <person name="Corby N."/>
            <person name="Dunn M."/>
            <person name="Johnson C."/>
            <person name="Wood J."/>
            <person name="Clark S."/>
            <person name="Pelan S."/>
            <person name="Griffiths G."/>
            <person name="Smith M."/>
            <person name="Glithero R."/>
            <person name="Howden P."/>
            <person name="Barker N."/>
            <person name="Lloyd C."/>
            <person name="Stevens C."/>
            <person name="Harley J."/>
            <person name="Holt K."/>
            <person name="Panagiotidis G."/>
            <person name="Lovell J."/>
            <person name="Beasley H."/>
            <person name="Henderson C."/>
            <person name="Gordon D."/>
            <person name="Auger K."/>
            <person name="Wright D."/>
            <person name="Collins J."/>
            <person name="Raisen C."/>
            <person name="Dyer L."/>
            <person name="Leung K."/>
            <person name="Robertson L."/>
            <person name="Ambridge K."/>
            <person name="Leongamornlert D."/>
            <person name="McGuire S."/>
            <person name="Gilderthorp R."/>
            <person name="Griffiths C."/>
            <person name="Manthravadi D."/>
            <person name="Nichol S."/>
            <person name="Barker G."/>
            <person name="Whitehead S."/>
            <person name="Kay M."/>
            <person name="Brown J."/>
            <person name="Murnane C."/>
            <person name="Gray E."/>
            <person name="Humphries M."/>
            <person name="Sycamore N."/>
            <person name="Barker D."/>
            <person name="Saunders D."/>
            <person name="Wallis J."/>
            <person name="Babbage A."/>
            <person name="Hammond S."/>
            <person name="Mashreghi-Mohammadi M."/>
            <person name="Barr L."/>
            <person name="Martin S."/>
            <person name="Wray P."/>
            <person name="Ellington A."/>
            <person name="Matthews N."/>
            <person name="Ellwood M."/>
            <person name="Woodmansey R."/>
            <person name="Clark G."/>
            <person name="Cooper J."/>
            <person name="Tromans A."/>
            <person name="Grafham D."/>
            <person name="Skuce C."/>
            <person name="Pandian R."/>
            <person name="Andrews R."/>
            <person name="Harrison E."/>
            <person name="Kimberley A."/>
            <person name="Garnett J."/>
            <person name="Fosker N."/>
            <person name="Hall R."/>
            <person name="Garner P."/>
            <person name="Kelly D."/>
            <person name="Bird C."/>
            <person name="Palmer S."/>
            <person name="Gehring I."/>
            <person name="Berger A."/>
            <person name="Dooley C.M."/>
            <person name="Ersan-Urun Z."/>
            <person name="Eser C."/>
            <person name="Geiger H."/>
            <person name="Geisler M."/>
            <person name="Karotki L."/>
            <person name="Kirn A."/>
            <person name="Konantz J."/>
            <person name="Konantz M."/>
            <person name="Oberlander M."/>
            <person name="Rudolph-Geiger S."/>
            <person name="Teucke M."/>
            <person name="Lanz C."/>
            <person name="Raddatz G."/>
            <person name="Osoegawa K."/>
            <person name="Zhu B."/>
            <person name="Rapp A."/>
            <person name="Widaa S."/>
            <person name="Langford C."/>
            <person name="Yang F."/>
            <person name="Schuster S.C."/>
            <person name="Carter N.P."/>
            <person name="Harrow J."/>
            <person name="Ning Z."/>
            <person name="Herrero J."/>
            <person name="Searle S.M."/>
            <person name="Enright A."/>
            <person name="Geisler R."/>
            <person name="Plasterk R.H."/>
            <person name="Lee C."/>
            <person name="Westerfield M."/>
            <person name="de Jong P.J."/>
            <person name="Zon L.I."/>
            <person name="Postlethwait J.H."/>
            <person name="Nusslein-Volhard C."/>
            <person name="Hubbard T.J."/>
            <person name="Roest Crollius H."/>
            <person name="Rogers J."/>
            <person name="Stemple D.L."/>
        </authorList>
    </citation>
    <scope>NUCLEOTIDE SEQUENCE [LARGE SCALE GENOMIC DNA]</scope>
    <source>
        <strain>Tuebingen</strain>
    </source>
</reference>
<reference key="2">
    <citation type="submission" date="2004-07" db="EMBL/GenBank/DDBJ databases">
        <authorList>
            <consortium name="NIH - Zebrafish Gene Collection (ZGC) project"/>
        </authorList>
    </citation>
    <scope>NUCLEOTIDE SEQUENCE [LARGE SCALE MRNA]</scope>
</reference>
<keyword id="KW-0158">Chromosome</keyword>
<keyword id="KW-0221">Differentiation</keyword>
<keyword id="KW-0469">Meiosis</keyword>
<keyword id="KW-0539">Nucleus</keyword>
<keyword id="KW-0896">Oogenesis</keyword>
<keyword id="KW-1185">Reference proteome</keyword>
<keyword id="KW-0744">Spermatogenesis</keyword>
<organism>
    <name type="scientific">Danio rerio</name>
    <name type="common">Zebrafish</name>
    <name type="synonym">Brachydanio rerio</name>
    <dbReference type="NCBI Taxonomy" id="7955"/>
    <lineage>
        <taxon>Eukaryota</taxon>
        <taxon>Metazoa</taxon>
        <taxon>Chordata</taxon>
        <taxon>Craniata</taxon>
        <taxon>Vertebrata</taxon>
        <taxon>Euteleostomi</taxon>
        <taxon>Actinopterygii</taxon>
        <taxon>Neopterygii</taxon>
        <taxon>Teleostei</taxon>
        <taxon>Ostariophysi</taxon>
        <taxon>Cypriniformes</taxon>
        <taxon>Danionidae</taxon>
        <taxon>Danioninae</taxon>
        <taxon>Danio</taxon>
    </lineage>
</organism>
<proteinExistence type="evidence at transcript level"/>
<protein>
    <recommendedName>
        <fullName>HORMA domain-containing protein 1</fullName>
    </recommendedName>
</protein>
<accession>A2BF66</accession>
<accession>Q6DHR9</accession>
<dbReference type="EMBL" id="BX248517">
    <property type="protein sequence ID" value="CAM12962.1"/>
    <property type="molecule type" value="Genomic_DNA"/>
</dbReference>
<dbReference type="EMBL" id="BC075898">
    <property type="protein sequence ID" value="AAH75898.1"/>
    <property type="molecule type" value="mRNA"/>
</dbReference>
<dbReference type="RefSeq" id="NP_001002357.1">
    <property type="nucleotide sequence ID" value="NM_001002357.1"/>
</dbReference>
<dbReference type="SMR" id="A2BF66"/>
<dbReference type="FunCoup" id="A2BF66">
    <property type="interactions" value="59"/>
</dbReference>
<dbReference type="STRING" id="7955.ENSDARP00000058887"/>
<dbReference type="PaxDb" id="7955-ENSDARP00000058887"/>
<dbReference type="PeptideAtlas" id="A2BF66"/>
<dbReference type="Ensembl" id="ENSDART00000058888">
    <property type="protein sequence ID" value="ENSDARP00000058887"/>
    <property type="gene ID" value="ENSDARG00000040254"/>
</dbReference>
<dbReference type="GeneID" id="436630"/>
<dbReference type="KEGG" id="dre:436630"/>
<dbReference type="AGR" id="ZFIN:ZDB-GENE-040718-49"/>
<dbReference type="CTD" id="84072"/>
<dbReference type="ZFIN" id="ZDB-GENE-040718-49">
    <property type="gene designation" value="hormad1"/>
</dbReference>
<dbReference type="eggNOG" id="KOG4652">
    <property type="taxonomic scope" value="Eukaryota"/>
</dbReference>
<dbReference type="HOGENOM" id="CLU_058638_1_0_1"/>
<dbReference type="InParanoid" id="A2BF66"/>
<dbReference type="OMA" id="IFQNKMV"/>
<dbReference type="OrthoDB" id="1928087at2759"/>
<dbReference type="PhylomeDB" id="A2BF66"/>
<dbReference type="TreeFam" id="TF313989"/>
<dbReference type="PRO" id="PR:A2BF66"/>
<dbReference type="Proteomes" id="UP000000437">
    <property type="component" value="Chromosome 16"/>
</dbReference>
<dbReference type="Bgee" id="ENSDARG00000040254">
    <property type="expression patterns" value="Expressed in testis and 10 other cell types or tissues"/>
</dbReference>
<dbReference type="GO" id="GO:0005694">
    <property type="term" value="C:chromosome"/>
    <property type="evidence" value="ECO:0000250"/>
    <property type="project" value="UniProtKB"/>
</dbReference>
<dbReference type="GO" id="GO:0005634">
    <property type="term" value="C:nucleus"/>
    <property type="evidence" value="ECO:0000250"/>
    <property type="project" value="UniProtKB"/>
</dbReference>
<dbReference type="GO" id="GO:0051321">
    <property type="term" value="P:meiotic cell cycle"/>
    <property type="evidence" value="ECO:0000250"/>
    <property type="project" value="UniProtKB"/>
</dbReference>
<dbReference type="GO" id="GO:0042138">
    <property type="term" value="P:meiotic DNA double-strand break formation"/>
    <property type="evidence" value="ECO:0000250"/>
    <property type="project" value="UniProtKB"/>
</dbReference>
<dbReference type="GO" id="GO:0051598">
    <property type="term" value="P:meiotic recombination checkpoint signaling"/>
    <property type="evidence" value="ECO:0000250"/>
    <property type="project" value="UniProtKB"/>
</dbReference>
<dbReference type="GO" id="GO:0051177">
    <property type="term" value="P:meiotic sister chromatid cohesion"/>
    <property type="evidence" value="ECO:0000250"/>
    <property type="project" value="UniProtKB"/>
</dbReference>
<dbReference type="GO" id="GO:0048477">
    <property type="term" value="P:oogenesis"/>
    <property type="evidence" value="ECO:0000250"/>
    <property type="project" value="UniProtKB"/>
</dbReference>
<dbReference type="GO" id="GO:0060629">
    <property type="term" value="P:regulation of homologous chromosome segregation"/>
    <property type="evidence" value="ECO:0000250"/>
    <property type="project" value="UniProtKB"/>
</dbReference>
<dbReference type="GO" id="GO:0007283">
    <property type="term" value="P:spermatogenesis"/>
    <property type="evidence" value="ECO:0000250"/>
    <property type="project" value="UniProtKB"/>
</dbReference>
<dbReference type="GO" id="GO:0007130">
    <property type="term" value="P:synaptonemal complex assembly"/>
    <property type="evidence" value="ECO:0000250"/>
    <property type="project" value="UniProtKB"/>
</dbReference>
<dbReference type="Gene3D" id="3.30.900.10">
    <property type="entry name" value="HORMA domain"/>
    <property type="match status" value="1"/>
</dbReference>
<dbReference type="InterPro" id="IPR003511">
    <property type="entry name" value="HORMA_dom"/>
</dbReference>
<dbReference type="InterPro" id="IPR036570">
    <property type="entry name" value="HORMA_dom_sf"/>
</dbReference>
<dbReference type="InterPro" id="IPR051294">
    <property type="entry name" value="HORMA_MeioticProgression"/>
</dbReference>
<dbReference type="PANTHER" id="PTHR48225">
    <property type="entry name" value="HORMA DOMAIN-CONTAINING PROTEIN 1"/>
    <property type="match status" value="1"/>
</dbReference>
<dbReference type="PANTHER" id="PTHR48225:SF3">
    <property type="entry name" value="HORMA DOMAIN-CONTAINING PROTEIN 1"/>
    <property type="match status" value="1"/>
</dbReference>
<dbReference type="Pfam" id="PF02301">
    <property type="entry name" value="HORMA"/>
    <property type="match status" value="1"/>
</dbReference>
<dbReference type="SUPFAM" id="SSF56019">
    <property type="entry name" value="The spindle assembly checkpoint protein mad2"/>
    <property type="match status" value="1"/>
</dbReference>
<dbReference type="PROSITE" id="PS50815">
    <property type="entry name" value="HORMA"/>
    <property type="match status" value="1"/>
</dbReference>
<feature type="chain" id="PRO_0000284667" description="HORMA domain-containing protein 1">
    <location>
        <begin position="1"/>
        <end position="356"/>
    </location>
</feature>
<feature type="domain" description="HORMA" evidence="2">
    <location>
        <begin position="24"/>
        <end position="225"/>
    </location>
</feature>
<feature type="region of interest" description="Disordered" evidence="3">
    <location>
        <begin position="282"/>
        <end position="305"/>
    </location>
</feature>
<feature type="region of interest" description="Disordered" evidence="3">
    <location>
        <begin position="333"/>
        <end position="356"/>
    </location>
</feature>
<feature type="compositionally biased region" description="Basic and acidic residues" evidence="3">
    <location>
        <begin position="288"/>
        <end position="298"/>
    </location>
</feature>
<feature type="compositionally biased region" description="Basic residues" evidence="3">
    <location>
        <begin position="347"/>
        <end position="356"/>
    </location>
</feature>
<feature type="sequence conflict" description="In Ref. 2; AAH75898." evidence="4" ref="2">
    <original>P</original>
    <variation>H</variation>
    <location>
        <position position="9"/>
    </location>
</feature>
<feature type="sequence conflict" description="In Ref. 2; AAH75898." evidence="4" ref="2">
    <original>A</original>
    <variation>V</variation>
    <location>
        <position position="312"/>
    </location>
</feature>
<evidence type="ECO:0000250" key="1">
    <source>
        <dbReference type="UniProtKB" id="Q9D5T7"/>
    </source>
</evidence>
<evidence type="ECO:0000255" key="2">
    <source>
        <dbReference type="PROSITE-ProRule" id="PRU00109"/>
    </source>
</evidence>
<evidence type="ECO:0000256" key="3">
    <source>
        <dbReference type="SAM" id="MobiDB-lite"/>
    </source>
</evidence>
<evidence type="ECO:0000305" key="4"/>
<comment type="function">
    <text evidence="1">Plays a key role in meiotic progression by ensuring that sufficient numbers of processed DNA double-strand breaks (DSBs) are available for successful homology search, promoting synaptonemal-complex formation independently and playing key role in the male mid-pachytene checkpoint and the female meiotic prophase checkpoint.</text>
</comment>
<comment type="subcellular location">
    <subcellularLocation>
        <location evidence="1">Nucleus</location>
    </subcellularLocation>
    <subcellularLocation>
        <location evidence="1">Chromosome</location>
    </subcellularLocation>
    <text evidence="1">Preferentially localizes to unsynapsed or desynapsed chromosomal regions during the prophase I stage of meiosis.</text>
</comment>
<sequence length="356" mass="40976">MTCEQKSRPVQSCQMLPDVVSNEQQSLVLVKKLLAIAISSITYLRGLFSEKAYGRKYVGELKVYILREDSCPGAQQIVHWLQGCFDALQRRYLRMVLLSIYCDPDNPQKVTECYQFKIKYTEKGPQMDFESKNGQSLTKMACDNTQKSSMLLVRKLYMLMQNLGPLPDDVCLNMKLLYYDEVTPQEYQPPGFKEDDNGTLMFEREPVNLTMGEVVTPFHSIKMNVTTEKKRIEPFEDDVEVCVSTKWSLKISEDGMMSETSVQQECMTKENVITDAGIEYSETQETQEQPHRHTKEDFSTNPKMDNLVKKTADLKVDARKTRSGRIFEPQISQLEFPLSQDPQPSVPKRRKVSVPK</sequence>
<gene>
    <name type="primary">hormad1</name>
    <name type="ORF">si:dkey-30o16.5</name>
    <name type="ORF">zgc:92129</name>
</gene>
<name>HORM1_DANRE</name>